<keyword id="KW-0488">Methylation</keyword>
<keyword id="KW-0687">Ribonucleoprotein</keyword>
<keyword id="KW-0689">Ribosomal protein</keyword>
<keyword id="KW-0694">RNA-binding</keyword>
<keyword id="KW-0699">rRNA-binding</keyword>
<keyword id="KW-0820">tRNA-binding</keyword>
<proteinExistence type="inferred from homology"/>
<reference key="1">
    <citation type="journal article" date="2005" name="Science">
        <title>Extensive DNA inversions in the B. fragilis genome control variable gene expression.</title>
        <authorList>
            <person name="Cerdeno-Tarraga A.-M."/>
            <person name="Patrick S."/>
            <person name="Crossman L.C."/>
            <person name="Blakely G."/>
            <person name="Abratt V."/>
            <person name="Lennard N."/>
            <person name="Poxton I."/>
            <person name="Duerden B."/>
            <person name="Harris B."/>
            <person name="Quail M.A."/>
            <person name="Barron A."/>
            <person name="Clark L."/>
            <person name="Corton C."/>
            <person name="Doggett J."/>
            <person name="Holden M.T.G."/>
            <person name="Larke N."/>
            <person name="Line A."/>
            <person name="Lord A."/>
            <person name="Norbertczak H."/>
            <person name="Ormond D."/>
            <person name="Price C."/>
            <person name="Rabbinowitsch E."/>
            <person name="Woodward J."/>
            <person name="Barrell B.G."/>
            <person name="Parkhill J."/>
        </authorList>
    </citation>
    <scope>NUCLEOTIDE SEQUENCE [LARGE SCALE GENOMIC DNA]</scope>
    <source>
        <strain>ATCC 25285 / DSM 2151 / CCUG 4856 / JCM 11019 / LMG 10263 / NCTC 9343 / Onslow / VPI 2553 / EN-2</strain>
    </source>
</reference>
<sequence>MPTIQQLVRKGREVLVEKSKSPALDSCPQRRGVCVRVYTTTPKKPNSAMRKVARVRLTNQKEVNSYIPGEGHNLQEHSIVLVRGGRVKDLPGVRYHIVRGTLDTAGVAGRTQRRSKYGAKRPKPGQAAPAKKK</sequence>
<dbReference type="EMBL" id="CR626927">
    <property type="protein sequence ID" value="CAH09683.1"/>
    <property type="molecule type" value="Genomic_DNA"/>
</dbReference>
<dbReference type="RefSeq" id="WP_005675419.1">
    <property type="nucleotide sequence ID" value="NZ_UFTH01000001.1"/>
</dbReference>
<dbReference type="SMR" id="Q5L8A5"/>
<dbReference type="PaxDb" id="272559-BF9343_3902"/>
<dbReference type="GeneID" id="93105328"/>
<dbReference type="KEGG" id="bfs:BF9343_3902"/>
<dbReference type="eggNOG" id="COG0048">
    <property type="taxonomic scope" value="Bacteria"/>
</dbReference>
<dbReference type="HOGENOM" id="CLU_104295_1_2_10"/>
<dbReference type="Proteomes" id="UP000006731">
    <property type="component" value="Chromosome"/>
</dbReference>
<dbReference type="GO" id="GO:0015935">
    <property type="term" value="C:small ribosomal subunit"/>
    <property type="evidence" value="ECO:0007669"/>
    <property type="project" value="InterPro"/>
</dbReference>
<dbReference type="GO" id="GO:0019843">
    <property type="term" value="F:rRNA binding"/>
    <property type="evidence" value="ECO:0007669"/>
    <property type="project" value="UniProtKB-UniRule"/>
</dbReference>
<dbReference type="GO" id="GO:0003735">
    <property type="term" value="F:structural constituent of ribosome"/>
    <property type="evidence" value="ECO:0007669"/>
    <property type="project" value="InterPro"/>
</dbReference>
<dbReference type="GO" id="GO:0000049">
    <property type="term" value="F:tRNA binding"/>
    <property type="evidence" value="ECO:0007669"/>
    <property type="project" value="UniProtKB-UniRule"/>
</dbReference>
<dbReference type="GO" id="GO:0006412">
    <property type="term" value="P:translation"/>
    <property type="evidence" value="ECO:0007669"/>
    <property type="project" value="UniProtKB-UniRule"/>
</dbReference>
<dbReference type="CDD" id="cd03368">
    <property type="entry name" value="Ribosomal_S12"/>
    <property type="match status" value="1"/>
</dbReference>
<dbReference type="FunFam" id="2.40.50.140:FF:000001">
    <property type="entry name" value="30S ribosomal protein S12"/>
    <property type="match status" value="1"/>
</dbReference>
<dbReference type="Gene3D" id="2.40.50.140">
    <property type="entry name" value="Nucleic acid-binding proteins"/>
    <property type="match status" value="1"/>
</dbReference>
<dbReference type="HAMAP" id="MF_00403_B">
    <property type="entry name" value="Ribosomal_uS12_B"/>
    <property type="match status" value="1"/>
</dbReference>
<dbReference type="InterPro" id="IPR012340">
    <property type="entry name" value="NA-bd_OB-fold"/>
</dbReference>
<dbReference type="InterPro" id="IPR006032">
    <property type="entry name" value="Ribosomal_uS12"/>
</dbReference>
<dbReference type="InterPro" id="IPR005679">
    <property type="entry name" value="Ribosomal_uS12_bac"/>
</dbReference>
<dbReference type="NCBIfam" id="TIGR00981">
    <property type="entry name" value="rpsL_bact"/>
    <property type="match status" value="1"/>
</dbReference>
<dbReference type="PANTHER" id="PTHR11652">
    <property type="entry name" value="30S RIBOSOMAL PROTEIN S12 FAMILY MEMBER"/>
    <property type="match status" value="1"/>
</dbReference>
<dbReference type="Pfam" id="PF00164">
    <property type="entry name" value="Ribosom_S12_S23"/>
    <property type="match status" value="1"/>
</dbReference>
<dbReference type="PIRSF" id="PIRSF002133">
    <property type="entry name" value="Ribosomal_S12/S23"/>
    <property type="match status" value="1"/>
</dbReference>
<dbReference type="PRINTS" id="PR01034">
    <property type="entry name" value="RIBOSOMALS12"/>
</dbReference>
<dbReference type="SUPFAM" id="SSF50249">
    <property type="entry name" value="Nucleic acid-binding proteins"/>
    <property type="match status" value="1"/>
</dbReference>
<dbReference type="PROSITE" id="PS00055">
    <property type="entry name" value="RIBOSOMAL_S12"/>
    <property type="match status" value="1"/>
</dbReference>
<organism>
    <name type="scientific">Bacteroides fragilis (strain ATCC 25285 / DSM 2151 / CCUG 4856 / JCM 11019 / LMG 10263 / NCTC 9343 / Onslow / VPI 2553 / EN-2)</name>
    <dbReference type="NCBI Taxonomy" id="272559"/>
    <lineage>
        <taxon>Bacteria</taxon>
        <taxon>Pseudomonadati</taxon>
        <taxon>Bacteroidota</taxon>
        <taxon>Bacteroidia</taxon>
        <taxon>Bacteroidales</taxon>
        <taxon>Bacteroidaceae</taxon>
        <taxon>Bacteroides</taxon>
    </lineage>
</organism>
<evidence type="ECO:0000250" key="1"/>
<evidence type="ECO:0000255" key="2">
    <source>
        <dbReference type="HAMAP-Rule" id="MF_00403"/>
    </source>
</evidence>
<evidence type="ECO:0000256" key="3">
    <source>
        <dbReference type="SAM" id="MobiDB-lite"/>
    </source>
</evidence>
<evidence type="ECO:0000305" key="4"/>
<feature type="chain" id="PRO_0000226375" description="Small ribosomal subunit protein uS12">
    <location>
        <begin position="1"/>
        <end position="133"/>
    </location>
</feature>
<feature type="region of interest" description="Disordered" evidence="3">
    <location>
        <begin position="103"/>
        <end position="133"/>
    </location>
</feature>
<feature type="compositionally biased region" description="Basic residues" evidence="3">
    <location>
        <begin position="111"/>
        <end position="123"/>
    </location>
</feature>
<feature type="compositionally biased region" description="Low complexity" evidence="3">
    <location>
        <begin position="124"/>
        <end position="133"/>
    </location>
</feature>
<feature type="modified residue" description="3-methylthioaspartic acid" evidence="1">
    <location>
        <position position="89"/>
    </location>
</feature>
<gene>
    <name evidence="2" type="primary">rpsL</name>
    <name type="ordered locus">BF4007</name>
</gene>
<protein>
    <recommendedName>
        <fullName evidence="2">Small ribosomal subunit protein uS12</fullName>
    </recommendedName>
    <alternativeName>
        <fullName evidence="4">30S ribosomal protein S12</fullName>
    </alternativeName>
</protein>
<comment type="function">
    <text evidence="2">With S4 and S5 plays an important role in translational accuracy.</text>
</comment>
<comment type="function">
    <text evidence="2">Interacts with and stabilizes bases of the 16S rRNA that are involved in tRNA selection in the A site and with the mRNA backbone. Located at the interface of the 30S and 50S subunits, it traverses the body of the 30S subunit contacting proteins on the other side and probably holding the rRNA structure together. The combined cluster of proteins S8, S12 and S17 appears to hold together the shoulder and platform of the 30S subunit.</text>
</comment>
<comment type="subunit">
    <text evidence="2">Part of the 30S ribosomal subunit. Contacts proteins S8 and S17. May interact with IF1 in the 30S initiation complex.</text>
</comment>
<comment type="similarity">
    <text evidence="2">Belongs to the universal ribosomal protein uS12 family.</text>
</comment>
<name>RS12_BACFN</name>
<accession>Q5L8A5</accession>